<accession>A9N0T2</accession>
<evidence type="ECO:0000255" key="1">
    <source>
        <dbReference type="HAMAP-Rule" id="MF_00392"/>
    </source>
</evidence>
<keyword id="KW-0328">Glycosyltransferase</keyword>
<keyword id="KW-0441">Lipid A biosynthesis</keyword>
<keyword id="KW-0444">Lipid biosynthesis</keyword>
<keyword id="KW-0443">Lipid metabolism</keyword>
<keyword id="KW-0808">Transferase</keyword>
<proteinExistence type="inferred from homology"/>
<comment type="function">
    <text evidence="1">Condensation of UDP-2,3-diacylglucosamine and 2,3-diacylglucosamine-1-phosphate to form lipid A disaccharide, a precursor of lipid A, a phosphorylated glycolipid that anchors the lipopolysaccharide to the outer membrane of the cell.</text>
</comment>
<comment type="catalytic activity">
    <reaction evidence="1">
        <text>2-N,3-O-bis[(3R)-3-hydroxytetradecanoyl]-alpha-D-glucosaminyl 1-phosphate + UDP-2-N,3-O-bis[(3R)-3-hydroxytetradecanoyl]-alpha-D-glucosamine = lipid A disaccharide (E. coli) + UDP + H(+)</text>
        <dbReference type="Rhea" id="RHEA:22668"/>
        <dbReference type="ChEBI" id="CHEBI:15378"/>
        <dbReference type="ChEBI" id="CHEBI:57957"/>
        <dbReference type="ChEBI" id="CHEBI:58223"/>
        <dbReference type="ChEBI" id="CHEBI:58466"/>
        <dbReference type="ChEBI" id="CHEBI:78847"/>
    </reaction>
</comment>
<comment type="catalytic activity">
    <reaction evidence="1">
        <text>a lipid X + a UDP-2-N,3-O-bis[(3R)-3-hydroxyacyl]-alpha-D-glucosamine = a lipid A disaccharide + UDP + H(+)</text>
        <dbReference type="Rhea" id="RHEA:67828"/>
        <dbReference type="ChEBI" id="CHEBI:15378"/>
        <dbReference type="ChEBI" id="CHEBI:58223"/>
        <dbReference type="ChEBI" id="CHEBI:137748"/>
        <dbReference type="ChEBI" id="CHEBI:176338"/>
        <dbReference type="ChEBI" id="CHEBI:176343"/>
        <dbReference type="EC" id="2.4.1.182"/>
    </reaction>
</comment>
<comment type="pathway">
    <text evidence="1">Glycolipid biosynthesis; lipid IV(A) biosynthesis; lipid IV(A) from (3R)-3-hydroxytetradecanoyl-[acyl-carrier-protein] and UDP-N-acetyl-alpha-D-glucosamine: step 5/6.</text>
</comment>
<comment type="similarity">
    <text evidence="1">Belongs to the LpxB family.</text>
</comment>
<gene>
    <name evidence="1" type="primary">lpxB</name>
    <name type="ordered locus">SPAB_00293</name>
</gene>
<feature type="chain" id="PRO_1000080283" description="Lipid-A-disaccharide synthase">
    <location>
        <begin position="1"/>
        <end position="382"/>
    </location>
</feature>
<name>LPXB_SALPB</name>
<dbReference type="EC" id="2.4.1.182" evidence="1"/>
<dbReference type="EMBL" id="CP000886">
    <property type="protein sequence ID" value="ABX65734.1"/>
    <property type="molecule type" value="Genomic_DNA"/>
</dbReference>
<dbReference type="RefSeq" id="WP_000741217.1">
    <property type="nucleotide sequence ID" value="NC_010102.1"/>
</dbReference>
<dbReference type="SMR" id="A9N0T2"/>
<dbReference type="CAZy" id="GT19">
    <property type="family name" value="Glycosyltransferase Family 19"/>
</dbReference>
<dbReference type="KEGG" id="spq:SPAB_00293"/>
<dbReference type="PATRIC" id="fig|1016998.12.peg.281"/>
<dbReference type="HOGENOM" id="CLU_036577_3_0_6"/>
<dbReference type="BioCyc" id="SENT1016998:SPAB_RS01185-MONOMER"/>
<dbReference type="UniPathway" id="UPA00359">
    <property type="reaction ID" value="UER00481"/>
</dbReference>
<dbReference type="Proteomes" id="UP000008556">
    <property type="component" value="Chromosome"/>
</dbReference>
<dbReference type="GO" id="GO:0016020">
    <property type="term" value="C:membrane"/>
    <property type="evidence" value="ECO:0007669"/>
    <property type="project" value="GOC"/>
</dbReference>
<dbReference type="GO" id="GO:0008915">
    <property type="term" value="F:lipid-A-disaccharide synthase activity"/>
    <property type="evidence" value="ECO:0007669"/>
    <property type="project" value="UniProtKB-UniRule"/>
</dbReference>
<dbReference type="GO" id="GO:0005543">
    <property type="term" value="F:phospholipid binding"/>
    <property type="evidence" value="ECO:0007669"/>
    <property type="project" value="TreeGrafter"/>
</dbReference>
<dbReference type="GO" id="GO:0009245">
    <property type="term" value="P:lipid A biosynthetic process"/>
    <property type="evidence" value="ECO:0007669"/>
    <property type="project" value="UniProtKB-UniRule"/>
</dbReference>
<dbReference type="CDD" id="cd01635">
    <property type="entry name" value="Glycosyltransferase_GTB-type"/>
    <property type="match status" value="1"/>
</dbReference>
<dbReference type="HAMAP" id="MF_00392">
    <property type="entry name" value="LpxB"/>
    <property type="match status" value="1"/>
</dbReference>
<dbReference type="InterPro" id="IPR003835">
    <property type="entry name" value="Glyco_trans_19"/>
</dbReference>
<dbReference type="NCBIfam" id="TIGR00215">
    <property type="entry name" value="lpxB"/>
    <property type="match status" value="1"/>
</dbReference>
<dbReference type="PANTHER" id="PTHR30372">
    <property type="entry name" value="LIPID-A-DISACCHARIDE SYNTHASE"/>
    <property type="match status" value="1"/>
</dbReference>
<dbReference type="PANTHER" id="PTHR30372:SF4">
    <property type="entry name" value="LIPID-A-DISACCHARIDE SYNTHASE, MITOCHONDRIAL-RELATED"/>
    <property type="match status" value="1"/>
</dbReference>
<dbReference type="Pfam" id="PF02684">
    <property type="entry name" value="LpxB"/>
    <property type="match status" value="1"/>
</dbReference>
<dbReference type="SUPFAM" id="SSF53756">
    <property type="entry name" value="UDP-Glycosyltransferase/glycogen phosphorylase"/>
    <property type="match status" value="1"/>
</dbReference>
<protein>
    <recommendedName>
        <fullName evidence="1">Lipid-A-disaccharide synthase</fullName>
        <ecNumber evidence="1">2.4.1.182</ecNumber>
    </recommendedName>
</protein>
<organism>
    <name type="scientific">Salmonella paratyphi B (strain ATCC BAA-1250 / SPB7)</name>
    <dbReference type="NCBI Taxonomy" id="1016998"/>
    <lineage>
        <taxon>Bacteria</taxon>
        <taxon>Pseudomonadati</taxon>
        <taxon>Pseudomonadota</taxon>
        <taxon>Gammaproteobacteria</taxon>
        <taxon>Enterobacterales</taxon>
        <taxon>Enterobacteriaceae</taxon>
        <taxon>Salmonella</taxon>
    </lineage>
</organism>
<reference key="1">
    <citation type="submission" date="2007-11" db="EMBL/GenBank/DDBJ databases">
        <authorList>
            <consortium name="The Salmonella enterica serovar Paratyphi B Genome Sequencing Project"/>
            <person name="McClelland M."/>
            <person name="Sanderson E.K."/>
            <person name="Porwollik S."/>
            <person name="Spieth J."/>
            <person name="Clifton W.S."/>
            <person name="Fulton R."/>
            <person name="Cordes M."/>
            <person name="Wollam A."/>
            <person name="Shah N."/>
            <person name="Pepin K."/>
            <person name="Bhonagiri V."/>
            <person name="Nash W."/>
            <person name="Johnson M."/>
            <person name="Thiruvilangam P."/>
            <person name="Wilson R."/>
        </authorList>
    </citation>
    <scope>NUCLEOTIDE SEQUENCE [LARGE SCALE GENOMIC DNA]</scope>
    <source>
        <strain>ATCC BAA-1250 / SPB7</strain>
    </source>
</reference>
<sequence>MAAQRPLTIALVAGETSGDILGAGLIRALKARVPNARFVGVAGPRMQAEGCEAWYEMEELAVMGIVEVLGRLRRLLHIRADLTRRFTELKPDVFVGIDAPDFNITLEGNLKKQGIKTIHYVSPSVWAWRQKRVFKIGRSTHMVLAFLPFEKAFYDKFNVPCRFIGHTMADAMPLDPDKNAARDVLGIPHDAHCLALLPGSRGAEVEMLSADFLKTAQLLRQRYPDLEVVVPLVNAKRREQFEKIKAEVAPDLAVHLLDGMAREAMIASDAALLASGTAALECMLAKCPMVVGYRMKPFTFWLAKRLVKTEYVSLPNLLAGRELVKELLQEECEPQKLAEALLPLLANGKTSHAMHDTFRELHQQIRCNADEQAANAVLELAQ</sequence>